<gene>
    <name type="ordered locus">At3g16580</name>
    <name type="ORF">MGL6.4</name>
</gene>
<organism>
    <name type="scientific">Arabidopsis thaliana</name>
    <name type="common">Mouse-ear cress</name>
    <dbReference type="NCBI Taxonomy" id="3702"/>
    <lineage>
        <taxon>Eukaryota</taxon>
        <taxon>Viridiplantae</taxon>
        <taxon>Streptophyta</taxon>
        <taxon>Embryophyta</taxon>
        <taxon>Tracheophyta</taxon>
        <taxon>Spermatophyta</taxon>
        <taxon>Magnoliopsida</taxon>
        <taxon>eudicotyledons</taxon>
        <taxon>Gunneridae</taxon>
        <taxon>Pentapetalae</taxon>
        <taxon>rosids</taxon>
        <taxon>malvids</taxon>
        <taxon>Brassicales</taxon>
        <taxon>Brassicaceae</taxon>
        <taxon>Camelineae</taxon>
        <taxon>Arabidopsis</taxon>
    </lineage>
</organism>
<dbReference type="EMBL" id="AB022217">
    <property type="protein sequence ID" value="BAB02749.1"/>
    <property type="molecule type" value="Genomic_DNA"/>
</dbReference>
<dbReference type="EMBL" id="CP002686">
    <property type="protein sequence ID" value="AEE75840.1"/>
    <property type="molecule type" value="Genomic_DNA"/>
</dbReference>
<dbReference type="EMBL" id="BT003948">
    <property type="protein sequence ID" value="AAO41993.1"/>
    <property type="molecule type" value="mRNA"/>
</dbReference>
<dbReference type="EMBL" id="BT005043">
    <property type="protein sequence ID" value="AAO50576.1"/>
    <property type="molecule type" value="mRNA"/>
</dbReference>
<dbReference type="EMBL" id="AY085675">
    <property type="protein sequence ID" value="AAM62894.1"/>
    <property type="molecule type" value="mRNA"/>
</dbReference>
<dbReference type="RefSeq" id="NP_566556.1">
    <property type="nucleotide sequence ID" value="NM_112531.2"/>
</dbReference>
<dbReference type="BioGRID" id="6242">
    <property type="interactions" value="10"/>
</dbReference>
<dbReference type="IntAct" id="Q9LUS6">
    <property type="interactions" value="2"/>
</dbReference>
<dbReference type="STRING" id="3702.Q9LUS6"/>
<dbReference type="PaxDb" id="3702-AT3G16580.1"/>
<dbReference type="ProteomicsDB" id="230930"/>
<dbReference type="EnsemblPlants" id="AT3G16580.1">
    <property type="protein sequence ID" value="AT3G16580.1"/>
    <property type="gene ID" value="AT3G16580"/>
</dbReference>
<dbReference type="GeneID" id="820908"/>
<dbReference type="Gramene" id="AT3G16580.1">
    <property type="protein sequence ID" value="AT3G16580.1"/>
    <property type="gene ID" value="AT3G16580"/>
</dbReference>
<dbReference type="KEGG" id="ath:AT3G16580"/>
<dbReference type="Araport" id="AT3G16580"/>
<dbReference type="TAIR" id="AT3G16580"/>
<dbReference type="HOGENOM" id="CLU_034692_2_1_1"/>
<dbReference type="InParanoid" id="Q9LUS6"/>
<dbReference type="OMA" id="ERFFNIC"/>
<dbReference type="PhylomeDB" id="Q9LUS6"/>
<dbReference type="PRO" id="PR:Q9LUS6"/>
<dbReference type="Proteomes" id="UP000006548">
    <property type="component" value="Chromosome 3"/>
</dbReference>
<dbReference type="ExpressionAtlas" id="Q9LUS6">
    <property type="expression patterns" value="baseline and differential"/>
</dbReference>
<dbReference type="GO" id="GO:0005773">
    <property type="term" value="C:vacuole"/>
    <property type="evidence" value="ECO:0007005"/>
    <property type="project" value="TAIR"/>
</dbReference>
<dbReference type="CDD" id="cd22157">
    <property type="entry name" value="F-box_AtFBW1-like"/>
    <property type="match status" value="1"/>
</dbReference>
<dbReference type="FunFam" id="1.20.1280.50:FF:000163">
    <property type="entry name" value="Protein SUPPRESSOR OF NIM1 1"/>
    <property type="match status" value="1"/>
</dbReference>
<dbReference type="Gene3D" id="1.20.1280.50">
    <property type="match status" value="1"/>
</dbReference>
<dbReference type="InterPro" id="IPR006527">
    <property type="entry name" value="F-box-assoc_dom_typ1"/>
</dbReference>
<dbReference type="InterPro" id="IPR017451">
    <property type="entry name" value="F-box-assoc_interact_dom"/>
</dbReference>
<dbReference type="InterPro" id="IPR036047">
    <property type="entry name" value="F-box-like_dom_sf"/>
</dbReference>
<dbReference type="InterPro" id="IPR001810">
    <property type="entry name" value="F-box_dom"/>
</dbReference>
<dbReference type="InterPro" id="IPR050796">
    <property type="entry name" value="SCF_F-box_component"/>
</dbReference>
<dbReference type="NCBIfam" id="TIGR01640">
    <property type="entry name" value="F_box_assoc_1"/>
    <property type="match status" value="1"/>
</dbReference>
<dbReference type="PANTHER" id="PTHR31672">
    <property type="entry name" value="BNACNNG10540D PROTEIN"/>
    <property type="match status" value="1"/>
</dbReference>
<dbReference type="PANTHER" id="PTHR31672:SF13">
    <property type="entry name" value="F-BOX PROTEIN CPR30-LIKE"/>
    <property type="match status" value="1"/>
</dbReference>
<dbReference type="Pfam" id="PF00646">
    <property type="entry name" value="F-box"/>
    <property type="match status" value="1"/>
</dbReference>
<dbReference type="Pfam" id="PF07734">
    <property type="entry name" value="FBA_1"/>
    <property type="match status" value="1"/>
</dbReference>
<dbReference type="SMART" id="SM00256">
    <property type="entry name" value="FBOX"/>
    <property type="match status" value="1"/>
</dbReference>
<dbReference type="SUPFAM" id="SSF81383">
    <property type="entry name" value="F-box domain"/>
    <property type="match status" value="1"/>
</dbReference>
<dbReference type="PROSITE" id="PS50181">
    <property type="entry name" value="FBOX"/>
    <property type="match status" value="1"/>
</dbReference>
<name>FBK55_ARATH</name>
<protein>
    <recommendedName>
        <fullName>F-box/kelch-repeat protein At3g16580</fullName>
    </recommendedName>
</protein>
<reference key="1">
    <citation type="journal article" date="2000" name="DNA Res.">
        <title>Structural analysis of Arabidopsis thaliana chromosome 3. I. Sequence features of the regions of 4,504,864 bp covered by sixty P1 and TAC clones.</title>
        <authorList>
            <person name="Sato S."/>
            <person name="Nakamura Y."/>
            <person name="Kaneko T."/>
            <person name="Katoh T."/>
            <person name="Asamizu E."/>
            <person name="Tabata S."/>
        </authorList>
    </citation>
    <scope>NUCLEOTIDE SEQUENCE [LARGE SCALE GENOMIC DNA]</scope>
    <source>
        <strain>cv. Columbia</strain>
    </source>
</reference>
<reference key="2">
    <citation type="journal article" date="2017" name="Plant J.">
        <title>Araport11: a complete reannotation of the Arabidopsis thaliana reference genome.</title>
        <authorList>
            <person name="Cheng C.Y."/>
            <person name="Krishnakumar V."/>
            <person name="Chan A.P."/>
            <person name="Thibaud-Nissen F."/>
            <person name="Schobel S."/>
            <person name="Town C.D."/>
        </authorList>
    </citation>
    <scope>GENOME REANNOTATION</scope>
    <source>
        <strain>cv. Columbia</strain>
    </source>
</reference>
<reference key="3">
    <citation type="journal article" date="2003" name="Science">
        <title>Empirical analysis of transcriptional activity in the Arabidopsis genome.</title>
        <authorList>
            <person name="Yamada K."/>
            <person name="Lim J."/>
            <person name="Dale J.M."/>
            <person name="Chen H."/>
            <person name="Shinn P."/>
            <person name="Palm C.J."/>
            <person name="Southwick A.M."/>
            <person name="Wu H.C."/>
            <person name="Kim C.J."/>
            <person name="Nguyen M."/>
            <person name="Pham P.K."/>
            <person name="Cheuk R.F."/>
            <person name="Karlin-Newmann G."/>
            <person name="Liu S.X."/>
            <person name="Lam B."/>
            <person name="Sakano H."/>
            <person name="Wu T."/>
            <person name="Yu G."/>
            <person name="Miranda M."/>
            <person name="Quach H.L."/>
            <person name="Tripp M."/>
            <person name="Chang C.H."/>
            <person name="Lee J.M."/>
            <person name="Toriumi M.J."/>
            <person name="Chan M.M."/>
            <person name="Tang C.C."/>
            <person name="Onodera C.S."/>
            <person name="Deng J.M."/>
            <person name="Akiyama K."/>
            <person name="Ansari Y."/>
            <person name="Arakawa T."/>
            <person name="Banh J."/>
            <person name="Banno F."/>
            <person name="Bowser L."/>
            <person name="Brooks S.Y."/>
            <person name="Carninci P."/>
            <person name="Chao Q."/>
            <person name="Choy N."/>
            <person name="Enju A."/>
            <person name="Goldsmith A.D."/>
            <person name="Gurjal M."/>
            <person name="Hansen N.F."/>
            <person name="Hayashizaki Y."/>
            <person name="Johnson-Hopson C."/>
            <person name="Hsuan V.W."/>
            <person name="Iida K."/>
            <person name="Karnes M."/>
            <person name="Khan S."/>
            <person name="Koesema E."/>
            <person name="Ishida J."/>
            <person name="Jiang P.X."/>
            <person name="Jones T."/>
            <person name="Kawai J."/>
            <person name="Kamiya A."/>
            <person name="Meyers C."/>
            <person name="Nakajima M."/>
            <person name="Narusaka M."/>
            <person name="Seki M."/>
            <person name="Sakurai T."/>
            <person name="Satou M."/>
            <person name="Tamse R."/>
            <person name="Vaysberg M."/>
            <person name="Wallender E.K."/>
            <person name="Wong C."/>
            <person name="Yamamura Y."/>
            <person name="Yuan S."/>
            <person name="Shinozaki K."/>
            <person name="Davis R.W."/>
            <person name="Theologis A."/>
            <person name="Ecker J.R."/>
        </authorList>
    </citation>
    <scope>NUCLEOTIDE SEQUENCE [LARGE SCALE MRNA]</scope>
    <source>
        <strain>cv. Columbia</strain>
    </source>
</reference>
<reference key="4">
    <citation type="submission" date="2002-03" db="EMBL/GenBank/DDBJ databases">
        <title>Full-length cDNA from Arabidopsis thaliana.</title>
        <authorList>
            <person name="Brover V.V."/>
            <person name="Troukhan M.E."/>
            <person name="Alexandrov N.A."/>
            <person name="Lu Y.-P."/>
            <person name="Flavell R.B."/>
            <person name="Feldmann K.A."/>
        </authorList>
    </citation>
    <scope>NUCLEOTIDE SEQUENCE [LARGE SCALE MRNA]</scope>
</reference>
<accession>Q9LUS6</accession>
<accession>Q8LE16</accession>
<feature type="chain" id="PRO_0000283215" description="F-box/kelch-repeat protein At3g16580">
    <location>
        <begin position="1"/>
        <end position="382"/>
    </location>
</feature>
<feature type="domain" description="F-box" evidence="1">
    <location>
        <begin position="9"/>
        <end position="55"/>
    </location>
</feature>
<feature type="repeat" description="Kelch 1">
    <location>
        <begin position="150"/>
        <end position="196"/>
    </location>
</feature>
<feature type="repeat" description="Kelch 2">
    <location>
        <begin position="334"/>
        <end position="381"/>
    </location>
</feature>
<feature type="sequence conflict" description="In Ref. 4; AAM62894." evidence="2" ref="4">
    <original>Q</original>
    <variation>H</variation>
    <location>
        <position position="41"/>
    </location>
</feature>
<feature type="sequence conflict" description="In Ref. 4; AAM62894." evidence="2" ref="4">
    <location>
        <position position="107"/>
    </location>
</feature>
<feature type="sequence conflict" description="In Ref. 4; AAM62894." evidence="2" ref="4">
    <original>L</original>
    <variation>F</variation>
    <location>
        <position position="165"/>
    </location>
</feature>
<feature type="sequence conflict" description="In Ref. 4; AAM62894." evidence="2" ref="4">
    <original>I</original>
    <variation>V</variation>
    <location>
        <position position="168"/>
    </location>
</feature>
<proteinExistence type="evidence at transcript level"/>
<sequence>MAHEEKRPWEFSLSLPWELIEEILSRVPPESLLRFKTVSKQWNALFRDKTFINNHKMTFRFILATKSKIYSVSIDPKIVVRELTLDIPGLESHEIPKKLVDCDKLLLCDMEKGVVLWNPWLRHSTWIDQGSNHTRMESYGIGYNNKGSYKIFAFCDRKENHTQRLLTIHDSASDAWKDREPIDNSQGKQIVHNIYTKISGVSLNGNLYLVTYFETTDLVYHLIEINSSSESVVKFCDLPCGTSNFLKDAFVLRVFEGDRFSLLKQCHATKKIEIWVSKYKINNNLDRDVEWIKFMEVSSPNLPDLVDGFDSQPSYFIEDKRLVVCSCNETGRAWIYVFGENKLISKTQIDSVVDLWPSHWTFIPSLVPVPRAQREEPAELQV</sequence>
<evidence type="ECO:0000255" key="1">
    <source>
        <dbReference type="PROSITE-ProRule" id="PRU00080"/>
    </source>
</evidence>
<evidence type="ECO:0000305" key="2"/>
<keyword id="KW-0880">Kelch repeat</keyword>
<keyword id="KW-1185">Reference proteome</keyword>
<keyword id="KW-0677">Repeat</keyword>